<proteinExistence type="evidence at protein level"/>
<feature type="chain" id="PRO_0000395000" description="Cilia- and flagella-associated protein 221">
    <location>
        <begin position="1"/>
        <end position="836"/>
    </location>
</feature>
<feature type="region of interest" description="Interaction with calmodulin" evidence="3">
    <location>
        <begin position="466"/>
        <end position="500"/>
    </location>
</feature>
<sequence length="836" mass="96956">MEVVKSPMQELQQAKEPFDTMSPLLLKSLVEEPKKRTEVPNHLLESRVYAKLLNNKVIQARPGIVHFGGYEIESKHQQILNIANISDEDTHLHILPPQTKYFQINFEKKEHRLIPGLSLTVTITFSPDEWRYYYDCIRIHCKGDDTLLVPIHAYPVLNNLDFPTFINLSDVFLGESKSYVIPLQCSCPVDFEFHITLLRSHQAFTIEPKSGIIPANGKAKVTVKFTPIQYGMAQIKIQLWISQFNSQPYECVFTGTCYPNMALPLEEFKRLNTRSKKVNVPLEKTTYVQFYPAPAKAKPQKLKEIDYQDLRFPADLSNPFAVATVLNQEPGKLKIKELKQVLDQGDEISKTRQMKEAIFEQKVRQDILTEIENHLKWQVHLGKEHTTYRFKRELTEEWKKARAKYKQNRGDPVEGEELQRLQTEQSQKRIVRDLKGKRQEFHPNFDPLVNNVWLTRHRAQRRFQQAARKIMLERRLLSMLGAIRGMDKESILRKIIQVNGKLIQGENPSRGRRAHLKQEDNIWRYSLESEEVLHFAFPTDSESYNELALDGLGLVPIKSPEIQIKHSYPYFTLKVPQLYKIKGYHPFSVNKSSTNYRLQKLARPLKHGAEDEVTTIITIPKKDTTPLSAKPSILSMKPPEGLAMSVEYDPLYIFNPSPGLFAVKHPLTYAETLIDYHLCSHPKYKYTQESHMGSSIPLTQRQFLHHTDIIPGIMNWKKFQPLVFSSMSDPSMVEATQRSDWYSSVMLPIDVPAPLEDLPEEDRLETTERDLCDQGIEVMLTPEMVQVEFPMLIHRDSKKEKDFKDSTQLPEKVGERVQEEMKNLRSKALNTYLILD</sequence>
<reference key="1">
    <citation type="journal article" date="2008" name="Mol. Cell. Biol.">
        <title>Primary ciliary dyskinesia in mice lacking the novel ciliary protein Pcdp1.</title>
        <authorList>
            <person name="Lee L."/>
            <person name="Campagna D.R."/>
            <person name="Pinkus J.L."/>
            <person name="Mulhern H."/>
            <person name="Wyatt T.A."/>
            <person name="Sisson J.H."/>
            <person name="Pavlik J.A."/>
            <person name="Pinkus G.S."/>
            <person name="Fleming M.D."/>
        </authorList>
    </citation>
    <scope>NUCLEOTIDE SEQUENCE [MRNA]</scope>
    <scope>FUNCTION</scope>
    <scope>DISRUPTION PHENOTYPE</scope>
    <scope>TISSUE SPECIFICITY</scope>
    <scope>SUBCELLULAR LOCATION</scope>
    <source>
        <strain>C57BL/6J x 129S6/SvEvTac</strain>
        <tissue>Testis</tissue>
    </source>
</reference>
<reference key="2">
    <citation type="journal article" date="2005" name="J. Biol. Chem.">
        <title>Identification and integrative analysis of 28 novel genes specifically expressed and developmentally regulated in murine spermatogenic cells.</title>
        <authorList>
            <person name="Hong S."/>
            <person name="Choi I."/>
            <person name="Woo J.M."/>
            <person name="Oh J."/>
            <person name="Kim T."/>
            <person name="Choi E."/>
            <person name="Kim T.W."/>
            <person name="Jung Y.K."/>
            <person name="Kim D.H."/>
            <person name="Sun C.H."/>
            <person name="Yi G.S."/>
            <person name="Eddy E.M."/>
            <person name="Cho C."/>
        </authorList>
    </citation>
    <scope>TISSUE SPECIFICITY</scope>
    <scope>DEVELOPMENTAL STAGE</scope>
</reference>
<reference key="3">
    <citation type="journal article" date="2010" name="J. Cell Biol.">
        <title>Pcdp1 is a central apparatus protein that binds Ca2+-calmodulin and regulates ciliary motility.</title>
        <authorList>
            <person name="DiPetrillo C.G."/>
            <person name="Smith E.F."/>
        </authorList>
    </citation>
    <scope>CALMODULIN-BINDING</scope>
    <scope>REGION</scope>
</reference>
<reference key="4">
    <citation type="journal article" date="2018" name="Int. J. Mol. Sci.">
        <title>SPAG17 Is Required for Male Germ Cell Differentiation and Fertility.</title>
        <authorList>
            <person name="Kazarian E."/>
            <person name="Son H."/>
            <person name="Sapao P."/>
            <person name="Li W."/>
            <person name="Zhang Z."/>
            <person name="Strauss J.F."/>
            <person name="Teves M.E."/>
        </authorList>
    </citation>
    <scope>SUBCELLULAR LOCATION</scope>
</reference>
<dbReference type="EMBL" id="EF632061">
    <property type="protein sequence ID" value="ABR25260.1"/>
    <property type="molecule type" value="mRNA"/>
</dbReference>
<dbReference type="CCDS" id="CCDS48340.1"/>
<dbReference type="RefSeq" id="NP_001108546.1">
    <property type="nucleotide sequence ID" value="NM_001115074.2"/>
</dbReference>
<dbReference type="RefSeq" id="XP_011246281.1">
    <property type="nucleotide sequence ID" value="XM_011247979.2"/>
</dbReference>
<dbReference type="RefSeq" id="XP_017175371.1">
    <property type="nucleotide sequence ID" value="XM_017319882.3"/>
</dbReference>
<dbReference type="RefSeq" id="XP_017175374.1">
    <property type="nucleotide sequence ID" value="XM_017319885.1"/>
</dbReference>
<dbReference type="SMR" id="A9Q751"/>
<dbReference type="FunCoup" id="A9Q751">
    <property type="interactions" value="38"/>
</dbReference>
<dbReference type="STRING" id="10090.ENSMUSP00000134576"/>
<dbReference type="iPTMnet" id="A9Q751"/>
<dbReference type="PhosphoSitePlus" id="A9Q751"/>
<dbReference type="PaxDb" id="10090-ENSMUSP00000134576"/>
<dbReference type="ProteomicsDB" id="289326"/>
<dbReference type="Antibodypedia" id="48000">
    <property type="antibodies" value="53 antibodies from 9 providers"/>
</dbReference>
<dbReference type="Ensembl" id="ENSMUST00000037840.12">
    <property type="protein sequence ID" value="ENSMUSP00000037703.6"/>
    <property type="gene ID" value="ENSMUSG00000036962.13"/>
</dbReference>
<dbReference type="Ensembl" id="ENSMUST00000174370.8">
    <property type="protein sequence ID" value="ENSMUSP00000134576.2"/>
    <property type="gene ID" value="ENSMUSG00000036962.13"/>
</dbReference>
<dbReference type="GeneID" id="226356"/>
<dbReference type="KEGG" id="mmu:226356"/>
<dbReference type="UCSC" id="uc011wqu.1">
    <property type="organism name" value="mouse"/>
</dbReference>
<dbReference type="AGR" id="MGI:2684947"/>
<dbReference type="CTD" id="200373"/>
<dbReference type="MGI" id="MGI:2684947">
    <property type="gene designation" value="Cfap221"/>
</dbReference>
<dbReference type="VEuPathDB" id="HostDB:ENSMUSG00000036962"/>
<dbReference type="eggNOG" id="ENOG502QT0T">
    <property type="taxonomic scope" value="Eukaryota"/>
</dbReference>
<dbReference type="GeneTree" id="ENSGT00390000006925"/>
<dbReference type="HOGENOM" id="CLU_020964_0_0_1"/>
<dbReference type="InParanoid" id="A9Q751"/>
<dbReference type="OMA" id="TYNPPQW"/>
<dbReference type="OrthoDB" id="5538672at2759"/>
<dbReference type="PhylomeDB" id="A9Q751"/>
<dbReference type="TreeFam" id="TF328807"/>
<dbReference type="BioGRID-ORCS" id="226356">
    <property type="hits" value="0 hits in 69 CRISPR screens"/>
</dbReference>
<dbReference type="ChiTaRS" id="Cfap221">
    <property type="organism name" value="mouse"/>
</dbReference>
<dbReference type="PRO" id="PR:A9Q751"/>
<dbReference type="Proteomes" id="UP000000589">
    <property type="component" value="Chromosome 1"/>
</dbReference>
<dbReference type="RNAct" id="A9Q751">
    <property type="molecule type" value="protein"/>
</dbReference>
<dbReference type="Bgee" id="ENSMUSG00000036962">
    <property type="expression patterns" value="Expressed in seminiferous tubule of testis and 24 other cell types or tissues"/>
</dbReference>
<dbReference type="ExpressionAtlas" id="A9Q751">
    <property type="expression patterns" value="baseline and differential"/>
</dbReference>
<dbReference type="GO" id="GO:0097729">
    <property type="term" value="C:9+2 motile cilium"/>
    <property type="evidence" value="ECO:0000314"/>
    <property type="project" value="MGI"/>
</dbReference>
<dbReference type="GO" id="GO:0005930">
    <property type="term" value="C:axoneme"/>
    <property type="evidence" value="ECO:0000250"/>
    <property type="project" value="UniProtKB"/>
</dbReference>
<dbReference type="GO" id="GO:0005737">
    <property type="term" value="C:cytoplasm"/>
    <property type="evidence" value="ECO:0000314"/>
    <property type="project" value="UniProtKB"/>
</dbReference>
<dbReference type="GO" id="GO:0005576">
    <property type="term" value="C:extracellular region"/>
    <property type="evidence" value="ECO:0007669"/>
    <property type="project" value="GOC"/>
</dbReference>
<dbReference type="GO" id="GO:0097386">
    <property type="term" value="C:glial cell projection"/>
    <property type="evidence" value="ECO:0000314"/>
    <property type="project" value="MGI"/>
</dbReference>
<dbReference type="GO" id="GO:0002177">
    <property type="term" value="C:manchette"/>
    <property type="evidence" value="ECO:0000314"/>
    <property type="project" value="UniProtKB"/>
</dbReference>
<dbReference type="GO" id="GO:0036126">
    <property type="term" value="C:sperm flagellum"/>
    <property type="evidence" value="ECO:0000314"/>
    <property type="project" value="MGI"/>
</dbReference>
<dbReference type="GO" id="GO:0005516">
    <property type="term" value="F:calmodulin binding"/>
    <property type="evidence" value="ECO:0000314"/>
    <property type="project" value="UniProtKB"/>
</dbReference>
<dbReference type="GO" id="GO:0090660">
    <property type="term" value="P:cerebrospinal fluid circulation"/>
    <property type="evidence" value="ECO:0000315"/>
    <property type="project" value="MGI"/>
</dbReference>
<dbReference type="GO" id="GO:0051649">
    <property type="term" value="P:establishment of localization in cell"/>
    <property type="evidence" value="ECO:0000315"/>
    <property type="project" value="MGI"/>
</dbReference>
<dbReference type="GO" id="GO:0120197">
    <property type="term" value="P:mucociliary clearance"/>
    <property type="evidence" value="ECO:0000315"/>
    <property type="project" value="MGI"/>
</dbReference>
<dbReference type="GO" id="GO:0120316">
    <property type="term" value="P:sperm flagellum assembly"/>
    <property type="evidence" value="ECO:0000315"/>
    <property type="project" value="MGI"/>
</dbReference>
<dbReference type="FunFam" id="2.60.40.10:FF:001321">
    <property type="entry name" value="Cilia and flagella associated protein 221"/>
    <property type="match status" value="1"/>
</dbReference>
<dbReference type="Gene3D" id="2.60.40.10">
    <property type="entry name" value="Immunoglobulins"/>
    <property type="match status" value="2"/>
</dbReference>
<dbReference type="InterPro" id="IPR029676">
    <property type="entry name" value="CFAP221"/>
</dbReference>
<dbReference type="InterPro" id="IPR053879">
    <property type="entry name" value="HYDIN_VesB_CFA65-like_Ig"/>
</dbReference>
<dbReference type="InterPro" id="IPR013783">
    <property type="entry name" value="Ig-like_fold"/>
</dbReference>
<dbReference type="PANTHER" id="PTHR46500">
    <property type="entry name" value="CILIA- AND FLAGELLA-ASSOCIATED PROTEIN 221"/>
    <property type="match status" value="1"/>
</dbReference>
<dbReference type="PANTHER" id="PTHR46500:SF1">
    <property type="entry name" value="CILIA- AND FLAGELLA-ASSOCIATED PROTEIN 221"/>
    <property type="match status" value="1"/>
</dbReference>
<dbReference type="Pfam" id="PF22544">
    <property type="entry name" value="HYDIN_VesB_CFA65-like_Ig"/>
    <property type="match status" value="1"/>
</dbReference>
<dbReference type="Pfam" id="PF24507">
    <property type="entry name" value="Ig_CFAP65_4th"/>
    <property type="match status" value="1"/>
</dbReference>
<gene>
    <name evidence="8" type="primary">Cfap221</name>
    <name evidence="8" type="synonym">Gm101</name>
    <name evidence="5" type="synonym">Pcdp1</name>
</gene>
<keyword id="KW-0112">Calmodulin-binding</keyword>
<keyword id="KW-0966">Cell projection</keyword>
<keyword id="KW-0969">Cilium</keyword>
<keyword id="KW-0970">Cilium biogenesis/degradation</keyword>
<keyword id="KW-0963">Cytoplasm</keyword>
<keyword id="KW-0206">Cytoskeleton</keyword>
<keyword id="KW-1185">Reference proteome</keyword>
<protein>
    <recommendedName>
        <fullName evidence="8">Cilia- and flagella-associated protein 221</fullName>
    </recommendedName>
    <alternativeName>
        <fullName evidence="5">Primary ciliary dyskinesia protein 1</fullName>
    </alternativeName>
</protein>
<accession>A9Q751</accession>
<name>PCDP1_MOUSE</name>
<organism>
    <name type="scientific">Mus musculus</name>
    <name type="common">Mouse</name>
    <dbReference type="NCBI Taxonomy" id="10090"/>
    <lineage>
        <taxon>Eukaryota</taxon>
        <taxon>Metazoa</taxon>
        <taxon>Chordata</taxon>
        <taxon>Craniata</taxon>
        <taxon>Vertebrata</taxon>
        <taxon>Euteleostomi</taxon>
        <taxon>Mammalia</taxon>
        <taxon>Eutheria</taxon>
        <taxon>Euarchontoglires</taxon>
        <taxon>Glires</taxon>
        <taxon>Rodentia</taxon>
        <taxon>Myomorpha</taxon>
        <taxon>Muroidea</taxon>
        <taxon>Muridae</taxon>
        <taxon>Murinae</taxon>
        <taxon>Mus</taxon>
        <taxon>Mus</taxon>
    </lineage>
</organism>
<evidence type="ECO:0000269" key="1">
    <source>
    </source>
</evidence>
<evidence type="ECO:0000269" key="2">
    <source>
    </source>
</evidence>
<evidence type="ECO:0000269" key="3">
    <source>
    </source>
</evidence>
<evidence type="ECO:0000269" key="4">
    <source>
    </source>
</evidence>
<evidence type="ECO:0000303" key="5">
    <source>
    </source>
</evidence>
<evidence type="ECO:0000305" key="6"/>
<evidence type="ECO:0000305" key="7">
    <source>
    </source>
</evidence>
<evidence type="ECO:0000312" key="8">
    <source>
        <dbReference type="MGI" id="MGI:2684947"/>
    </source>
</evidence>
<comment type="function">
    <text evidence="7">May play a role in cilium morphogenesis.</text>
</comment>
<comment type="subunit">
    <text evidence="3">Interacts with calmodulin; calcium-dependent.</text>
</comment>
<comment type="subcellular location">
    <subcellularLocation>
        <location evidence="2">Cytoplasm</location>
        <location evidence="2">Cytoskeleton</location>
        <location evidence="2">Cilium axoneme</location>
    </subcellularLocation>
    <subcellularLocation>
        <location evidence="2 4">Cytoplasm</location>
    </subcellularLocation>
    <subcellularLocation>
        <location evidence="4">Cytoplasm</location>
        <location evidence="4">Cytoskeleton</location>
    </subcellularLocation>
    <text evidence="4">Localizes to the manchette in elongating spermatids in a SPAG17-dependent manner.</text>
</comment>
<comment type="tissue specificity">
    <text evidence="1 2">Expressed in testis, specifically in developing spermatocytes and spermatids but not in immature spermatogonia. Expressed in the ciliated respiratory epithelial cells lining the sinuses, trachea and bronchi (at protein level).</text>
</comment>
<comment type="developmental stage">
    <text evidence="1">Expression in testis starts at P20.</text>
</comment>
<comment type="disruption phenotype">
    <text evidence="2">Mice lacking Pcdp1 have several phenotypes associated with primary ciliary diskinesia, including hydrocephalus, male infertility and respiratory abnormalities. Hydrocephalus is observed on the B6 background but not on the 129 background. Male infertility is observed on both backgrounds and is due to an absence of mature spermatozoa in the seminiferous tubules.</text>
</comment>
<comment type="similarity">
    <text evidence="6">Belongs to the PCDP1 family.</text>
</comment>